<evidence type="ECO:0000255" key="1">
    <source>
        <dbReference type="PROSITE-ProRule" id="PRU01182"/>
    </source>
</evidence>
<evidence type="ECO:0000305" key="2"/>
<proteinExistence type="inferred from homology"/>
<dbReference type="EMBL" id="CP001364">
    <property type="protein sequence ID" value="ACM55251.1"/>
    <property type="molecule type" value="Genomic_DNA"/>
</dbReference>
<dbReference type="SMR" id="B9LEQ9"/>
<dbReference type="KEGG" id="chl:Chy400_3887"/>
<dbReference type="HOGENOM" id="CLU_073529_0_2_0"/>
<dbReference type="OrthoDB" id="9804482at2"/>
<dbReference type="GO" id="GO:0046872">
    <property type="term" value="F:metal ion binding"/>
    <property type="evidence" value="ECO:0007669"/>
    <property type="project" value="UniProtKB-KW"/>
</dbReference>
<dbReference type="GO" id="GO:0008237">
    <property type="term" value="F:metallopeptidase activity"/>
    <property type="evidence" value="ECO:0007669"/>
    <property type="project" value="UniProtKB-KW"/>
</dbReference>
<dbReference type="GO" id="GO:0006508">
    <property type="term" value="P:proteolysis"/>
    <property type="evidence" value="ECO:0007669"/>
    <property type="project" value="UniProtKB-KW"/>
</dbReference>
<dbReference type="CDD" id="cd08071">
    <property type="entry name" value="MPN_DUF2466"/>
    <property type="match status" value="1"/>
</dbReference>
<dbReference type="Gene3D" id="3.40.140.10">
    <property type="entry name" value="Cytidine Deaminase, domain 2"/>
    <property type="match status" value="1"/>
</dbReference>
<dbReference type="InterPro" id="IPR037518">
    <property type="entry name" value="MPN"/>
</dbReference>
<dbReference type="InterPro" id="IPR025657">
    <property type="entry name" value="RadC_JAB"/>
</dbReference>
<dbReference type="InterPro" id="IPR010994">
    <property type="entry name" value="RuvA_2-like"/>
</dbReference>
<dbReference type="InterPro" id="IPR001405">
    <property type="entry name" value="UPF0758"/>
</dbReference>
<dbReference type="InterPro" id="IPR020891">
    <property type="entry name" value="UPF0758_CS"/>
</dbReference>
<dbReference type="InterPro" id="IPR046778">
    <property type="entry name" value="UPF0758_N"/>
</dbReference>
<dbReference type="NCBIfam" id="NF000642">
    <property type="entry name" value="PRK00024.1"/>
    <property type="match status" value="1"/>
</dbReference>
<dbReference type="NCBIfam" id="TIGR00608">
    <property type="entry name" value="radc"/>
    <property type="match status" value="1"/>
</dbReference>
<dbReference type="PANTHER" id="PTHR30471">
    <property type="entry name" value="DNA REPAIR PROTEIN RADC"/>
    <property type="match status" value="1"/>
</dbReference>
<dbReference type="PANTHER" id="PTHR30471:SF3">
    <property type="entry name" value="UPF0758 PROTEIN YEES-RELATED"/>
    <property type="match status" value="1"/>
</dbReference>
<dbReference type="Pfam" id="PF04002">
    <property type="entry name" value="RadC"/>
    <property type="match status" value="1"/>
</dbReference>
<dbReference type="Pfam" id="PF20582">
    <property type="entry name" value="UPF0758_N"/>
    <property type="match status" value="1"/>
</dbReference>
<dbReference type="SUPFAM" id="SSF102712">
    <property type="entry name" value="JAB1/MPN domain"/>
    <property type="match status" value="1"/>
</dbReference>
<dbReference type="SUPFAM" id="SSF47781">
    <property type="entry name" value="RuvA domain 2-like"/>
    <property type="match status" value="1"/>
</dbReference>
<dbReference type="PROSITE" id="PS50249">
    <property type="entry name" value="MPN"/>
    <property type="match status" value="1"/>
</dbReference>
<dbReference type="PROSITE" id="PS01302">
    <property type="entry name" value="UPF0758"/>
    <property type="match status" value="1"/>
</dbReference>
<reference key="1">
    <citation type="submission" date="2009-01" db="EMBL/GenBank/DDBJ databases">
        <title>Complete sequence of Chloroflexus sp. Y-400-fl.</title>
        <authorList>
            <consortium name="US DOE Joint Genome Institute"/>
            <person name="Lucas S."/>
            <person name="Copeland A."/>
            <person name="Lapidus A."/>
            <person name="Glavina del Rio T."/>
            <person name="Dalin E."/>
            <person name="Tice H."/>
            <person name="Bruce D."/>
            <person name="Goodwin L."/>
            <person name="Pitluck S."/>
            <person name="Sims D."/>
            <person name="Kiss H."/>
            <person name="Brettin T."/>
            <person name="Detter J.C."/>
            <person name="Han C."/>
            <person name="Larimer F."/>
            <person name="Land M."/>
            <person name="Hauser L."/>
            <person name="Kyrpides N."/>
            <person name="Ovchinnikova G."/>
            <person name="Bryant D.A."/>
            <person name="Richardson P."/>
        </authorList>
    </citation>
    <scope>NUCLEOTIDE SEQUENCE [LARGE SCALE GENOMIC DNA]</scope>
    <source>
        <strain>ATCC 29364 / DSM 637 / Y-400-fl</strain>
    </source>
</reference>
<sequence>MISLRIHEQPIHDQPRERLARQGAGALSDAELLAILLRVGTNGTNVLQLAQQLLAESGGLQGLQRLDFQELCRLHGMGVSKAASVKAALEIGRRLARSAIEERFPIRSPADVATLLLVEMSHLDQEHLRTILLDTKNRVQQITTVYIGSLNSANVRVGEVFKEAVRRNSAAIIVVHNHPSGEPTPSMEDIEITRQLVSAGRLLDIEVVDHLIIGNGRYVSLRERGLGFE</sequence>
<organism>
    <name type="scientific">Chloroflexus aurantiacus (strain ATCC 29364 / DSM 637 / Y-400-fl)</name>
    <dbReference type="NCBI Taxonomy" id="480224"/>
    <lineage>
        <taxon>Bacteria</taxon>
        <taxon>Bacillati</taxon>
        <taxon>Chloroflexota</taxon>
        <taxon>Chloroflexia</taxon>
        <taxon>Chloroflexales</taxon>
        <taxon>Chloroflexineae</taxon>
        <taxon>Chloroflexaceae</taxon>
        <taxon>Chloroflexus</taxon>
    </lineage>
</organism>
<protein>
    <recommendedName>
        <fullName>UPF0758 protein Chy400_3887</fullName>
    </recommendedName>
</protein>
<gene>
    <name type="ordered locus">Chy400_3887</name>
</gene>
<comment type="similarity">
    <text evidence="2">Belongs to the UPF0758 family.</text>
</comment>
<name>Y3887_CHLSY</name>
<accession>B9LEQ9</accession>
<feature type="chain" id="PRO_1000195289" description="UPF0758 protein Chy400_3887">
    <location>
        <begin position="1"/>
        <end position="229"/>
    </location>
</feature>
<feature type="domain" description="MPN" evidence="1">
    <location>
        <begin position="105"/>
        <end position="227"/>
    </location>
</feature>
<feature type="short sequence motif" description="JAMM motif" evidence="1">
    <location>
        <begin position="176"/>
        <end position="189"/>
    </location>
</feature>
<feature type="binding site" evidence="1">
    <location>
        <position position="176"/>
    </location>
    <ligand>
        <name>Zn(2+)</name>
        <dbReference type="ChEBI" id="CHEBI:29105"/>
        <note>catalytic</note>
    </ligand>
</feature>
<feature type="binding site" evidence="1">
    <location>
        <position position="178"/>
    </location>
    <ligand>
        <name>Zn(2+)</name>
        <dbReference type="ChEBI" id="CHEBI:29105"/>
        <note>catalytic</note>
    </ligand>
</feature>
<feature type="binding site" evidence="1">
    <location>
        <position position="189"/>
    </location>
    <ligand>
        <name>Zn(2+)</name>
        <dbReference type="ChEBI" id="CHEBI:29105"/>
        <note>catalytic</note>
    </ligand>
</feature>
<keyword id="KW-0378">Hydrolase</keyword>
<keyword id="KW-0479">Metal-binding</keyword>
<keyword id="KW-0482">Metalloprotease</keyword>
<keyword id="KW-0645">Protease</keyword>
<keyword id="KW-0862">Zinc</keyword>